<name>PA2C_PSEPO</name>
<reference key="1">
    <citation type="journal article" date="1989" name="Toxicon">
        <title>Purification, sequencing and characterization of pseudexin phospholipases A2 from Pseudechis porphyriacus (Australian red-bellied black snake).</title>
        <authorList>
            <person name="Schmidt J.J."/>
            <person name="Middlebrook J.L."/>
        </authorList>
    </citation>
    <scope>PROTEIN SEQUENCE</scope>
    <source>
        <tissue>Venom</tissue>
    </source>
</reference>
<protein>
    <recommendedName>
        <fullName>Phospholipase A2 pseudexin C chain</fullName>
        <shortName>svPLA2</shortName>
        <ecNumber>3.1.1.4</ecNumber>
    </recommendedName>
    <alternativeName>
        <fullName>Phosphatidylcholine 2-acylhydrolase</fullName>
    </alternativeName>
</protein>
<keyword id="KW-0106">Calcium</keyword>
<keyword id="KW-0903">Direct protein sequencing</keyword>
<keyword id="KW-1015">Disulfide bond</keyword>
<keyword id="KW-0378">Hydrolase</keyword>
<keyword id="KW-0442">Lipid degradation</keyword>
<keyword id="KW-0443">Lipid metabolism</keyword>
<keyword id="KW-0479">Metal-binding</keyword>
<keyword id="KW-0964">Secreted</keyword>
<organism>
    <name type="scientific">Pseudechis porphyriacus</name>
    <name type="common">Red-bellied black snake</name>
    <dbReference type="NCBI Taxonomy" id="8671"/>
    <lineage>
        <taxon>Eukaryota</taxon>
        <taxon>Metazoa</taxon>
        <taxon>Chordata</taxon>
        <taxon>Craniata</taxon>
        <taxon>Vertebrata</taxon>
        <taxon>Euteleostomi</taxon>
        <taxon>Lepidosauria</taxon>
        <taxon>Squamata</taxon>
        <taxon>Bifurcata</taxon>
        <taxon>Unidentata</taxon>
        <taxon>Episquamata</taxon>
        <taxon>Toxicofera</taxon>
        <taxon>Serpentes</taxon>
        <taxon>Colubroidea</taxon>
        <taxon>Elapidae</taxon>
        <taxon>Hydrophiinae</taxon>
        <taxon>Pseudechis</taxon>
    </lineage>
</organism>
<feature type="chain" id="PRO_0000161693" description="Phospholipase A2 pseudexin C chain">
    <location>
        <begin position="1"/>
        <end position="28" status="greater than"/>
    </location>
</feature>
<feature type="binding site" evidence="1">
    <location>
        <position position="28"/>
    </location>
    <ligand>
        <name>Ca(2+)</name>
        <dbReference type="ChEBI" id="CHEBI:29108"/>
    </ligand>
</feature>
<feature type="disulfide bond" evidence="1">
    <location>
        <begin position="11"/>
        <end status="unknown"/>
    </location>
</feature>
<feature type="disulfide bond" evidence="1">
    <location>
        <begin position="27"/>
        <end status="unknown"/>
    </location>
</feature>
<feature type="non-terminal residue">
    <location>
        <position position="28"/>
    </location>
</feature>
<dbReference type="EC" id="3.1.1.4"/>
<dbReference type="PIR" id="C32416">
    <property type="entry name" value="C32416"/>
</dbReference>
<dbReference type="SMR" id="P20260"/>
<dbReference type="GO" id="GO:0005576">
    <property type="term" value="C:extracellular region"/>
    <property type="evidence" value="ECO:0007669"/>
    <property type="project" value="UniProtKB-SubCell"/>
</dbReference>
<dbReference type="GO" id="GO:0046872">
    <property type="term" value="F:metal ion binding"/>
    <property type="evidence" value="ECO:0007669"/>
    <property type="project" value="UniProtKB-KW"/>
</dbReference>
<dbReference type="GO" id="GO:0004623">
    <property type="term" value="F:phospholipase A2 activity"/>
    <property type="evidence" value="ECO:0007669"/>
    <property type="project" value="UniProtKB-EC"/>
</dbReference>
<dbReference type="GO" id="GO:0050482">
    <property type="term" value="P:arachidonate secretion"/>
    <property type="evidence" value="ECO:0007669"/>
    <property type="project" value="InterPro"/>
</dbReference>
<dbReference type="GO" id="GO:0016042">
    <property type="term" value="P:lipid catabolic process"/>
    <property type="evidence" value="ECO:0007669"/>
    <property type="project" value="UniProtKB-KW"/>
</dbReference>
<dbReference type="GO" id="GO:0006644">
    <property type="term" value="P:phospholipid metabolic process"/>
    <property type="evidence" value="ECO:0007669"/>
    <property type="project" value="InterPro"/>
</dbReference>
<dbReference type="Gene3D" id="1.20.90.10">
    <property type="entry name" value="Phospholipase A2 domain"/>
    <property type="match status" value="1"/>
</dbReference>
<dbReference type="InterPro" id="IPR036444">
    <property type="entry name" value="PLipase_A2_dom_sf"/>
</dbReference>
<dbReference type="SUPFAM" id="SSF48619">
    <property type="entry name" value="Phospholipase A2, PLA2"/>
    <property type="match status" value="1"/>
</dbReference>
<proteinExistence type="evidence at protein level"/>
<comment type="function">
    <text>PLA2 catalyzes the calcium-dependent hydrolysis of the 2-acyl groups in 3-sn-phosphoglycerides.</text>
</comment>
<comment type="catalytic activity">
    <reaction evidence="2 3">
        <text>a 1,2-diacyl-sn-glycero-3-phosphocholine + H2O = a 1-acyl-sn-glycero-3-phosphocholine + a fatty acid + H(+)</text>
        <dbReference type="Rhea" id="RHEA:15801"/>
        <dbReference type="ChEBI" id="CHEBI:15377"/>
        <dbReference type="ChEBI" id="CHEBI:15378"/>
        <dbReference type="ChEBI" id="CHEBI:28868"/>
        <dbReference type="ChEBI" id="CHEBI:57643"/>
        <dbReference type="ChEBI" id="CHEBI:58168"/>
        <dbReference type="EC" id="3.1.1.4"/>
    </reaction>
</comment>
<comment type="cofactor">
    <cofactor evidence="1">
        <name>Ca(2+)</name>
        <dbReference type="ChEBI" id="CHEBI:29108"/>
    </cofactor>
    <text evidence="1">Binds 1 Ca(2+) ion.</text>
</comment>
<comment type="subcellular location">
    <subcellularLocation>
        <location>Secreted</location>
    </subcellularLocation>
</comment>
<comment type="tissue specificity">
    <text>Expressed by the venom gland.</text>
</comment>
<comment type="miscellaneous">
    <text evidence="5">Is not toxic.</text>
</comment>
<comment type="similarity">
    <text evidence="4">Belongs to the phospholipase A2 family. Group I subfamily.</text>
</comment>
<sequence>NLIQLSNMIKCAIPGSRPLFQYTDYGCY</sequence>
<evidence type="ECO:0000250" key="1"/>
<evidence type="ECO:0000255" key="2">
    <source>
        <dbReference type="PROSITE-ProRule" id="PRU10035"/>
    </source>
</evidence>
<evidence type="ECO:0000255" key="3">
    <source>
        <dbReference type="PROSITE-ProRule" id="PRU10036"/>
    </source>
</evidence>
<evidence type="ECO:0000305" key="4"/>
<evidence type="ECO:0000305" key="5">
    <source>
    </source>
</evidence>
<accession>P20260</accession>